<evidence type="ECO:0000255" key="1">
    <source>
        <dbReference type="HAMAP-Rule" id="MF_00912"/>
    </source>
</evidence>
<evidence type="ECO:0000255" key="2">
    <source>
        <dbReference type="PROSITE-ProRule" id="PRU01115"/>
    </source>
</evidence>
<reference key="1">
    <citation type="journal article" date="2001" name="J. Bacteriol.">
        <title>Genome sequence and comparative analysis of the solvent-producing bacterium Clostridium acetobutylicum.</title>
        <authorList>
            <person name="Noelling J."/>
            <person name="Breton G."/>
            <person name="Omelchenko M.V."/>
            <person name="Makarova K.S."/>
            <person name="Zeng Q."/>
            <person name="Gibson R."/>
            <person name="Lee H.M."/>
            <person name="Dubois J."/>
            <person name="Qiu D."/>
            <person name="Hitti J."/>
            <person name="Wolf Y.I."/>
            <person name="Tatusov R.L."/>
            <person name="Sabathe F."/>
            <person name="Doucette-Stamm L.A."/>
            <person name="Soucaille P."/>
            <person name="Daly M.J."/>
            <person name="Bennett G.N."/>
            <person name="Koonin E.V."/>
            <person name="Smith D.R."/>
        </authorList>
    </citation>
    <scope>NUCLEOTIDE SEQUENCE [LARGE SCALE GENOMIC DNA]</scope>
    <source>
        <strain>ATCC 824 / DSM 792 / JCM 1419 / IAM 19013 / LMG 5710 / NBRC 13948 / NRRL B-527 / VKM B-1787 / 2291 / W</strain>
    </source>
</reference>
<name>DIVIB_CLOAB</name>
<accession>Q97H88</accession>
<gene>
    <name evidence="1" type="primary">divIB</name>
    <name type="ordered locus">CA_C2125</name>
</gene>
<keyword id="KW-0131">Cell cycle</keyword>
<keyword id="KW-0132">Cell division</keyword>
<keyword id="KW-1003">Cell membrane</keyword>
<keyword id="KW-0472">Membrane</keyword>
<keyword id="KW-1185">Reference proteome</keyword>
<keyword id="KW-0812">Transmembrane</keyword>
<keyword id="KW-1133">Transmembrane helix</keyword>
<sequence length="249" mass="28927">MKEENEYIVKRRKKRRRKRITIFLFLLICILVTLCLKLPYFNIKYINVEGNKIIKSDNIIENSKLKKGNNIFYLNLNKYKDNIMQDPYIKNVSIRQKLPNTIDIIVKERQAVFYINSGENYFIIDKNGVLLEIRKNISGMNLIKLDGVTLKNGKIGTEIPCDSRRLELINQITSVSIKDNNLKITDVDMSHILSLKVYFKNMCVVIGTPDDIYNKLNEAVNVIISQKLIDKKGYVDVSFKGNPVYSLQQ</sequence>
<comment type="function">
    <text evidence="1">Cell division protein that may be involved in stabilizing or promoting the assembly of the division complex.</text>
</comment>
<comment type="subcellular location">
    <subcellularLocation>
        <location evidence="1">Cell membrane</location>
        <topology evidence="1">Single-pass type II membrane protein</topology>
    </subcellularLocation>
    <text evidence="1">Localizes to the division septum.</text>
</comment>
<comment type="similarity">
    <text evidence="1">Belongs to the FtsQ/DivIB family. DivIB subfamily.</text>
</comment>
<protein>
    <recommendedName>
        <fullName evidence="1">Cell division protein DivIB</fullName>
    </recommendedName>
</protein>
<dbReference type="EMBL" id="AE001437">
    <property type="protein sequence ID" value="AAK80083.1"/>
    <property type="molecule type" value="Genomic_DNA"/>
</dbReference>
<dbReference type="PIR" id="H97161">
    <property type="entry name" value="H97161"/>
</dbReference>
<dbReference type="RefSeq" id="NP_348743.1">
    <property type="nucleotide sequence ID" value="NC_003030.1"/>
</dbReference>
<dbReference type="RefSeq" id="WP_010965424.1">
    <property type="nucleotide sequence ID" value="NC_003030.1"/>
</dbReference>
<dbReference type="SMR" id="Q97H88"/>
<dbReference type="STRING" id="272562.CA_C2125"/>
<dbReference type="KEGG" id="cac:CA_C2125"/>
<dbReference type="PATRIC" id="fig|272562.8.peg.2327"/>
<dbReference type="eggNOG" id="COG1589">
    <property type="taxonomic scope" value="Bacteria"/>
</dbReference>
<dbReference type="HOGENOM" id="CLU_047677_4_2_9"/>
<dbReference type="OrthoDB" id="1953902at2"/>
<dbReference type="Proteomes" id="UP000000814">
    <property type="component" value="Chromosome"/>
</dbReference>
<dbReference type="GO" id="GO:0032153">
    <property type="term" value="C:cell division site"/>
    <property type="evidence" value="ECO:0007669"/>
    <property type="project" value="UniProtKB-UniRule"/>
</dbReference>
<dbReference type="GO" id="GO:0005886">
    <property type="term" value="C:plasma membrane"/>
    <property type="evidence" value="ECO:0007669"/>
    <property type="project" value="UniProtKB-SubCell"/>
</dbReference>
<dbReference type="GO" id="GO:0043093">
    <property type="term" value="P:FtsZ-dependent cytokinesis"/>
    <property type="evidence" value="ECO:0007669"/>
    <property type="project" value="UniProtKB-UniRule"/>
</dbReference>
<dbReference type="Gene3D" id="3.10.20.310">
    <property type="entry name" value="membrane protein fhac"/>
    <property type="match status" value="1"/>
</dbReference>
<dbReference type="HAMAP" id="MF_00912">
    <property type="entry name" value="DivIB"/>
    <property type="match status" value="1"/>
</dbReference>
<dbReference type="InterPro" id="IPR005548">
    <property type="entry name" value="Cell_div_FtsQ/DivIB_C"/>
</dbReference>
<dbReference type="InterPro" id="IPR026580">
    <property type="entry name" value="DivIB"/>
</dbReference>
<dbReference type="InterPro" id="IPR050487">
    <property type="entry name" value="FtsQ_DivIB"/>
</dbReference>
<dbReference type="InterPro" id="IPR034746">
    <property type="entry name" value="POTRA"/>
</dbReference>
<dbReference type="InterPro" id="IPR013685">
    <property type="entry name" value="POTRA_FtsQ_type"/>
</dbReference>
<dbReference type="PANTHER" id="PTHR37820">
    <property type="entry name" value="CELL DIVISION PROTEIN DIVIB"/>
    <property type="match status" value="1"/>
</dbReference>
<dbReference type="PANTHER" id="PTHR37820:SF1">
    <property type="entry name" value="CELL DIVISION PROTEIN FTSQ"/>
    <property type="match status" value="1"/>
</dbReference>
<dbReference type="Pfam" id="PF03799">
    <property type="entry name" value="FtsQ_DivIB_C"/>
    <property type="match status" value="1"/>
</dbReference>
<dbReference type="Pfam" id="PF08478">
    <property type="entry name" value="POTRA_1"/>
    <property type="match status" value="1"/>
</dbReference>
<dbReference type="PROSITE" id="PS51779">
    <property type="entry name" value="POTRA"/>
    <property type="match status" value="1"/>
</dbReference>
<feature type="chain" id="PRO_0000414761" description="Cell division protein DivIB">
    <location>
        <begin position="1"/>
        <end position="249"/>
    </location>
</feature>
<feature type="topological domain" description="Cytoplasmic" evidence="1">
    <location>
        <begin position="1"/>
        <end position="19"/>
    </location>
</feature>
<feature type="transmembrane region" description="Helical" evidence="1">
    <location>
        <begin position="20"/>
        <end position="40"/>
    </location>
</feature>
<feature type="topological domain" description="Extracellular" evidence="1">
    <location>
        <begin position="41"/>
        <end position="249"/>
    </location>
</feature>
<feature type="domain" description="POTRA" evidence="2">
    <location>
        <begin position="41"/>
        <end position="109"/>
    </location>
</feature>
<proteinExistence type="inferred from homology"/>
<organism>
    <name type="scientific">Clostridium acetobutylicum (strain ATCC 824 / DSM 792 / JCM 1419 / IAM 19013 / LMG 5710 / NBRC 13948 / NRRL B-527 / VKM B-1787 / 2291 / W)</name>
    <dbReference type="NCBI Taxonomy" id="272562"/>
    <lineage>
        <taxon>Bacteria</taxon>
        <taxon>Bacillati</taxon>
        <taxon>Bacillota</taxon>
        <taxon>Clostridia</taxon>
        <taxon>Eubacteriales</taxon>
        <taxon>Clostridiaceae</taxon>
        <taxon>Clostridium</taxon>
    </lineage>
</organism>